<organism>
    <name type="scientific">Escherichia coli O6:H1 (strain CFT073 / ATCC 700928 / UPEC)</name>
    <dbReference type="NCBI Taxonomy" id="199310"/>
    <lineage>
        <taxon>Bacteria</taxon>
        <taxon>Pseudomonadati</taxon>
        <taxon>Pseudomonadota</taxon>
        <taxon>Gammaproteobacteria</taxon>
        <taxon>Enterobacterales</taxon>
        <taxon>Enterobacteriaceae</taxon>
        <taxon>Escherichia</taxon>
    </lineage>
</organism>
<accession>P0A7I1</accession>
<accession>P07011</accession>
<accession>P77340</accession>
<keyword id="KW-0963">Cytoplasm</keyword>
<keyword id="KW-0488">Methylation</keyword>
<keyword id="KW-0648">Protein biosynthesis</keyword>
<keyword id="KW-1185">Reference proteome</keyword>
<sequence length="360" mass="40517">MKPSIVAKLEALHERHEEVQALLGDAQTIADQERFRALSREYAQLSDVSRCFTDWQQVQEDIETAQMMLDDPEMREMAQDELREAKEKSEQLEQQLQVLLLPKDPDDERNAFLEVRAGTGGDEAALFAGDLFRMYSRYAEARRWRVEIMSASEGEHGGYKEIIAKISGDGVYGRLKFESGGHRVQRVPATESQGRIHTSACTVAVMPELPDAELPDINPADLRIDTFRSSGAGGQHVNTTDSAIRITHLPTGIVVECQDERSQHKNKAKALSVLGARIHAAEMAKRQQAEASTRRNLLGSGDRSDRNRTYNFPQGRVTDHRINLTLYRLDEVMEGKLDMLIEPIIQEHQADQLAALSEQE</sequence>
<feature type="chain" id="PRO_0000177670" description="Peptide chain release factor 1">
    <location>
        <begin position="1"/>
        <end position="360"/>
    </location>
</feature>
<feature type="region of interest" description="Disordered" evidence="2">
    <location>
        <begin position="284"/>
        <end position="313"/>
    </location>
</feature>
<feature type="modified residue" description="N5-methylglutamine" evidence="1">
    <location>
        <position position="235"/>
    </location>
</feature>
<evidence type="ECO:0000250" key="1"/>
<evidence type="ECO:0000256" key="2">
    <source>
        <dbReference type="SAM" id="MobiDB-lite"/>
    </source>
</evidence>
<evidence type="ECO:0000305" key="3"/>
<comment type="function">
    <text evidence="1">Peptide chain release factor 1 directs the termination of translation in response to the peptide chain termination codons UAG and UAA.</text>
</comment>
<comment type="subcellular location">
    <subcellularLocation>
        <location evidence="1">Cytoplasm</location>
    </subcellularLocation>
</comment>
<comment type="PTM">
    <text evidence="1">Methylated by PrmC. Methylation increases the termination efficiency of RF1 (By similarity).</text>
</comment>
<comment type="similarity">
    <text evidence="3">Belongs to the prokaryotic/mitochondrial release factor family.</text>
</comment>
<proteinExistence type="inferred from homology"/>
<protein>
    <recommendedName>
        <fullName>Peptide chain release factor 1</fullName>
        <shortName>RF-1</shortName>
    </recommendedName>
</protein>
<reference key="1">
    <citation type="journal article" date="2002" name="Proc. Natl. Acad. Sci. U.S.A.">
        <title>Extensive mosaic structure revealed by the complete genome sequence of uropathogenic Escherichia coli.</title>
        <authorList>
            <person name="Welch R.A."/>
            <person name="Burland V."/>
            <person name="Plunkett G. III"/>
            <person name="Redford P."/>
            <person name="Roesch P."/>
            <person name="Rasko D."/>
            <person name="Buckles E.L."/>
            <person name="Liou S.-R."/>
            <person name="Boutin A."/>
            <person name="Hackett J."/>
            <person name="Stroud D."/>
            <person name="Mayhew G.F."/>
            <person name="Rose D.J."/>
            <person name="Zhou S."/>
            <person name="Schwartz D.C."/>
            <person name="Perna N.T."/>
            <person name="Mobley H.L.T."/>
            <person name="Donnenberg M.S."/>
            <person name="Blattner F.R."/>
        </authorList>
    </citation>
    <scope>NUCLEOTIDE SEQUENCE [LARGE SCALE GENOMIC DNA]</scope>
    <source>
        <strain>CFT073 / ATCC 700928 / UPEC</strain>
    </source>
</reference>
<dbReference type="EMBL" id="AE014075">
    <property type="protein sequence ID" value="AAN80134.1"/>
    <property type="molecule type" value="Genomic_DNA"/>
</dbReference>
<dbReference type="RefSeq" id="WP_000804726.1">
    <property type="nucleotide sequence ID" value="NZ_CP051263.1"/>
</dbReference>
<dbReference type="SMR" id="P0A7I1"/>
<dbReference type="STRING" id="199310.c1669"/>
<dbReference type="GeneID" id="93775276"/>
<dbReference type="KEGG" id="ecc:c1669"/>
<dbReference type="eggNOG" id="COG0216">
    <property type="taxonomic scope" value="Bacteria"/>
</dbReference>
<dbReference type="HOGENOM" id="CLU_036856_0_1_6"/>
<dbReference type="BioCyc" id="ECOL199310:C1669-MONOMER"/>
<dbReference type="Proteomes" id="UP000001410">
    <property type="component" value="Chromosome"/>
</dbReference>
<dbReference type="GO" id="GO:0005737">
    <property type="term" value="C:cytoplasm"/>
    <property type="evidence" value="ECO:0007669"/>
    <property type="project" value="UniProtKB-SubCell"/>
</dbReference>
<dbReference type="GO" id="GO:0016149">
    <property type="term" value="F:translation release factor activity, codon specific"/>
    <property type="evidence" value="ECO:0007669"/>
    <property type="project" value="UniProtKB-UniRule"/>
</dbReference>
<dbReference type="FunFam" id="3.30.160.20:FF:000004">
    <property type="entry name" value="Peptide chain release factor 1"/>
    <property type="match status" value="1"/>
</dbReference>
<dbReference type="FunFam" id="3.30.70.1660:FF:000002">
    <property type="entry name" value="Peptide chain release factor 1"/>
    <property type="match status" value="1"/>
</dbReference>
<dbReference type="FunFam" id="3.30.70.1660:FF:000004">
    <property type="entry name" value="Peptide chain release factor 1"/>
    <property type="match status" value="1"/>
</dbReference>
<dbReference type="Gene3D" id="3.30.160.20">
    <property type="match status" value="1"/>
</dbReference>
<dbReference type="Gene3D" id="3.30.70.1660">
    <property type="match status" value="1"/>
</dbReference>
<dbReference type="Gene3D" id="6.10.140.1950">
    <property type="match status" value="1"/>
</dbReference>
<dbReference type="HAMAP" id="MF_00093">
    <property type="entry name" value="Rel_fac_1"/>
    <property type="match status" value="1"/>
</dbReference>
<dbReference type="InterPro" id="IPR005139">
    <property type="entry name" value="PCRF"/>
</dbReference>
<dbReference type="InterPro" id="IPR000352">
    <property type="entry name" value="Pep_chain_release_fac_I"/>
</dbReference>
<dbReference type="InterPro" id="IPR045853">
    <property type="entry name" value="Pep_chain_release_fac_I_sf"/>
</dbReference>
<dbReference type="InterPro" id="IPR050057">
    <property type="entry name" value="Prokaryotic/Mito_RF"/>
</dbReference>
<dbReference type="InterPro" id="IPR004373">
    <property type="entry name" value="RF-1"/>
</dbReference>
<dbReference type="NCBIfam" id="TIGR00019">
    <property type="entry name" value="prfA"/>
    <property type="match status" value="1"/>
</dbReference>
<dbReference type="NCBIfam" id="NF001859">
    <property type="entry name" value="PRK00591.1"/>
    <property type="match status" value="1"/>
</dbReference>
<dbReference type="PANTHER" id="PTHR43804">
    <property type="entry name" value="LD18447P"/>
    <property type="match status" value="1"/>
</dbReference>
<dbReference type="PANTHER" id="PTHR43804:SF7">
    <property type="entry name" value="LD18447P"/>
    <property type="match status" value="1"/>
</dbReference>
<dbReference type="Pfam" id="PF03462">
    <property type="entry name" value="PCRF"/>
    <property type="match status" value="1"/>
</dbReference>
<dbReference type="Pfam" id="PF00472">
    <property type="entry name" value="RF-1"/>
    <property type="match status" value="1"/>
</dbReference>
<dbReference type="SMART" id="SM00937">
    <property type="entry name" value="PCRF"/>
    <property type="match status" value="1"/>
</dbReference>
<dbReference type="SUPFAM" id="SSF75620">
    <property type="entry name" value="Release factor"/>
    <property type="match status" value="1"/>
</dbReference>
<dbReference type="PROSITE" id="PS00745">
    <property type="entry name" value="RF_PROK_I"/>
    <property type="match status" value="1"/>
</dbReference>
<name>RF1_ECOL6</name>
<gene>
    <name type="primary">prfA</name>
    <name type="ordered locus">c1669</name>
</gene>